<protein>
    <recommendedName>
        <fullName>Uncharacterized protein RF_0053</fullName>
    </recommendedName>
</protein>
<dbReference type="EMBL" id="CP000053">
    <property type="protein sequence ID" value="AAY60904.1"/>
    <property type="molecule type" value="Genomic_DNA"/>
</dbReference>
<dbReference type="STRING" id="315456.RF_0053"/>
<dbReference type="KEGG" id="rfe:RF_0053"/>
<dbReference type="eggNOG" id="COG3203">
    <property type="taxonomic scope" value="Bacteria"/>
</dbReference>
<dbReference type="HOGENOM" id="CLU_628327_0_0_5"/>
<dbReference type="OrthoDB" id="6758483at2"/>
<dbReference type="Proteomes" id="UP000008548">
    <property type="component" value="Chromosome"/>
</dbReference>
<dbReference type="GO" id="GO:0016020">
    <property type="term" value="C:membrane"/>
    <property type="evidence" value="ECO:0007669"/>
    <property type="project" value="InterPro"/>
</dbReference>
<dbReference type="GO" id="GO:0015288">
    <property type="term" value="F:porin activity"/>
    <property type="evidence" value="ECO:0007669"/>
    <property type="project" value="InterPro"/>
</dbReference>
<dbReference type="Gene3D" id="2.40.160.10">
    <property type="entry name" value="Porin"/>
    <property type="match status" value="1"/>
</dbReference>
<dbReference type="InterPro" id="IPR033900">
    <property type="entry name" value="Gram_neg_porin_domain"/>
</dbReference>
<dbReference type="InterPro" id="IPR023614">
    <property type="entry name" value="Porin_dom_sf"/>
</dbReference>
<dbReference type="Pfam" id="PF13609">
    <property type="entry name" value="Porin_4"/>
    <property type="match status" value="1"/>
</dbReference>
<dbReference type="SUPFAM" id="SSF56935">
    <property type="entry name" value="Porins"/>
    <property type="match status" value="1"/>
</dbReference>
<reference key="1">
    <citation type="journal article" date="2005" name="PLoS Biol.">
        <title>The genome sequence of Rickettsia felis identifies the first putative conjugative plasmid in an obligate intracellular parasite.</title>
        <authorList>
            <person name="Ogata H."/>
            <person name="Renesto P."/>
            <person name="Audic S."/>
            <person name="Robert C."/>
            <person name="Blanc G."/>
            <person name="Fournier P.-E."/>
            <person name="Parinello H."/>
            <person name="Claverie J.-M."/>
            <person name="Raoult D."/>
        </authorList>
    </citation>
    <scope>NUCLEOTIDE SEQUENCE [LARGE SCALE GENOMIC DNA]</scope>
    <source>
        <strain>ATCC VR-1525 / URRWXCal2</strain>
    </source>
</reference>
<feature type="signal peptide" evidence="1">
    <location>
        <begin position="1"/>
        <end position="19"/>
    </location>
</feature>
<feature type="chain" id="PRO_0000260170" description="Uncharacterized protein RF_0053">
    <location>
        <begin position="20"/>
        <end position="439"/>
    </location>
</feature>
<accession>Q4UNF4</accession>
<name>Y053_RICFE</name>
<organism>
    <name type="scientific">Rickettsia felis (strain ATCC VR-1525 / URRWXCal2)</name>
    <name type="common">Rickettsia azadi</name>
    <dbReference type="NCBI Taxonomy" id="315456"/>
    <lineage>
        <taxon>Bacteria</taxon>
        <taxon>Pseudomonadati</taxon>
        <taxon>Pseudomonadota</taxon>
        <taxon>Alphaproteobacteria</taxon>
        <taxon>Rickettsiales</taxon>
        <taxon>Rickettsiaceae</taxon>
        <taxon>Rickettsieae</taxon>
        <taxon>Rickettsia</taxon>
        <taxon>spotted fever group</taxon>
    </lineage>
</organism>
<keyword id="KW-0732">Signal</keyword>
<evidence type="ECO:0000255" key="1"/>
<proteinExistence type="inferred from homology"/>
<gene>
    <name type="ordered locus">RF_0053</name>
</gene>
<sequence>MKKLLLTASIICLASAGLAEENPTPVISNSDTEIKLEGFYLFESGYIKQDHLILFDKNVTDNRKKLGFYTEAAFAATISKTINDVIAGAKIVLQPTTRVKTSASYNGSHIFIETSYGKVELGSPVDASAKLRVTGSQVTAGTGGWYRYALLDGQYMRYNGLKPDFDTSASFYLESYSNSFDQINEKTEKARRLNFFTPKMKGFQAGISYTPDTANTGGNKDINNLTLESSGRNGVSVSRTGIKTVSLGNGETMTINQNIRDAFSAGLTYEHEISEDADLKLSVTGEYGKPARRLVHAKMEGTKVIEVLNTYKLSNLKAYNLGAVFTYGNFSCGASYGSLGKSLTAKEYYKVGRDTYYYNGAVAYGQGPIKTSLEYLKTSRYKNTVDAVSLATEYKIMPGLLPYAEISHFQAKGKPVYYPEAPSKTTRGTVGLIGTKLKF</sequence>